<sequence length="449" mass="49448">MAFARRLLRGPLSGPLLGRRGVCAGAMAPPRRFVLELPDCTLAHFALGADAPGDADAPDPRLAALLGPPERSYSLCVPVTPDAGCGARVRAARLHQRLLHQLRRGPFQRCQLLRLLCYCPGGQAGGAQQGFLLRDPLDDPDTRQALLELLGACQEAPRPHLGEFEADPRGQLWQRLWEVQDGRRLQVGCAQVVPVPEPPLHPVVPDLPSSVVFPDREAARAVLEECTSFIPEARAVLDLVDQCPKQIQKGKFQVVAIEGLDATGKTTVTQSVADSLKAVLLKSPPSCIGQWRKIFDDEPTIIRRAFYSLGNYIVASEIAKESAKSPVIVDRYWHSTATYAIATEVSGGLQHLPPAHHPVYQWPEDLLKPDLILLLTVSPEERLQRLQGRGMEKTREEAELEANSVFRQKVEMSYQRMENPGCHVVDASPSREKVLQTVLSLIQNSFSEP</sequence>
<name>CMPK2_HUMAN</name>
<proteinExistence type="evidence at protein level"/>
<protein>
    <recommendedName>
        <fullName>UMP-CMP kinase 2, mitochondrial</fullName>
        <ecNumber>2.7.4.14</ecNumber>
    </recommendedName>
    <alternativeName>
        <fullName>Nucleoside-diphosphate kinase</fullName>
        <ecNumber>2.7.4.6</ecNumber>
    </alternativeName>
</protein>
<feature type="transit peptide" description="Mitochondrion" evidence="2">
    <location>
        <begin position="1"/>
        <end position="98"/>
    </location>
</feature>
<feature type="chain" id="PRO_0000331524" description="UMP-CMP kinase 2, mitochondrial">
    <location>
        <begin position="99"/>
        <end position="449"/>
    </location>
</feature>
<feature type="coiled-coil region" evidence="2">
    <location>
        <begin position="380"/>
        <end position="412"/>
    </location>
</feature>
<feature type="binding site" evidence="2">
    <location>
        <begin position="259"/>
        <end position="266"/>
    </location>
    <ligand>
        <name>ATP</name>
        <dbReference type="ChEBI" id="CHEBI:30616"/>
    </ligand>
</feature>
<feature type="splice variant" id="VSP_033238" description="In isoform 2." evidence="10">
    <original>LLKSPPSCIGQWRKIFDDEPTIIR</original>
    <variation>PQPITLCTSGQRTCSNLTLSCCSL</variation>
    <location>
        <begin position="280"/>
        <end position="303"/>
    </location>
</feature>
<feature type="splice variant" id="VSP_033239" description="In isoform 2." evidence="10">
    <location>
        <begin position="304"/>
        <end position="449"/>
    </location>
</feature>
<feature type="splice variant" id="VSP_033240" description="In isoform 3." evidence="11">
    <original>YWHSTATYAIATEVSGGLQHLPPAHHPVYQWPEDLLKPDLILLLTVSPEERLQRLQGRGMEKTREEAELEANSVFRQKVEMSYQRMENPGCHVVDASPSREKVLQTVLSLIQNSFSEP</original>
    <variation>SQLGGTLYHPSLHLLGSEVCGTGILDSSHSSQGLE</variation>
    <location>
        <begin position="332"/>
        <end position="449"/>
    </location>
</feature>
<feature type="splice variant" id="VSP_033241" description="In isoform 4." evidence="11">
    <location>
        <begin position="410"/>
        <end position="449"/>
    </location>
</feature>
<feature type="sequence variant" id="VAR_090198" description="In IBGC10; uncertain significance; decreased protein abundance; no effect on subcellular location; dbSNP:rs1322954088." evidence="7">
    <original>Y</original>
    <variation>C</variation>
    <location>
        <position position="414"/>
    </location>
</feature>
<feature type="sequence variant" id="VAR_055997" description="In dbSNP:rs6712141.">
    <original>K</original>
    <variation>R</variation>
    <location>
        <position position="433"/>
    </location>
</feature>
<feature type="sequence conflict" description="In Ref. 3; AAH89425." evidence="12" ref="3">
    <original>E</original>
    <variation>G</variation>
    <location>
        <position position="448"/>
    </location>
</feature>
<evidence type="ECO:0000250" key="1">
    <source>
        <dbReference type="UniProtKB" id="Q3U5Q7"/>
    </source>
</evidence>
<evidence type="ECO:0000255" key="2"/>
<evidence type="ECO:0000269" key="3">
    <source>
    </source>
</evidence>
<evidence type="ECO:0000269" key="4">
    <source>
    </source>
</evidence>
<evidence type="ECO:0000269" key="5">
    <source>
    </source>
</evidence>
<evidence type="ECO:0000269" key="6">
    <source>
    </source>
</evidence>
<evidence type="ECO:0000269" key="7">
    <source>
    </source>
</evidence>
<evidence type="ECO:0000269" key="8">
    <source>
    </source>
</evidence>
<evidence type="ECO:0000269" key="9">
    <source>
    </source>
</evidence>
<evidence type="ECO:0000303" key="10">
    <source>
    </source>
</evidence>
<evidence type="ECO:0000303" key="11">
    <source>
    </source>
</evidence>
<evidence type="ECO:0000305" key="12"/>
<reference key="1">
    <citation type="journal article" date="2008" name="J. Biol. Chem.">
        <title>Human UMP-CMP kinase 2, a novel nucleoside monophosphate kinase localized in mitochondria.</title>
        <authorList>
            <person name="Xu Y."/>
            <person name="Johansson M."/>
            <person name="Karlsson A."/>
        </authorList>
    </citation>
    <scope>NUCLEOTIDE SEQUENCE [MRNA] (ISOFORM 1)</scope>
    <scope>FUNCTION</scope>
    <scope>SUBCELLULAR LOCATION</scope>
</reference>
<reference key="2">
    <citation type="journal article" date="2004" name="Nat. Genet.">
        <title>Complete sequencing and characterization of 21,243 full-length human cDNAs.</title>
        <authorList>
            <person name="Ota T."/>
            <person name="Suzuki Y."/>
            <person name="Nishikawa T."/>
            <person name="Otsuki T."/>
            <person name="Sugiyama T."/>
            <person name="Irie R."/>
            <person name="Wakamatsu A."/>
            <person name="Hayashi K."/>
            <person name="Sato H."/>
            <person name="Nagai K."/>
            <person name="Kimura K."/>
            <person name="Makita H."/>
            <person name="Sekine M."/>
            <person name="Obayashi M."/>
            <person name="Nishi T."/>
            <person name="Shibahara T."/>
            <person name="Tanaka T."/>
            <person name="Ishii S."/>
            <person name="Yamamoto J."/>
            <person name="Saito K."/>
            <person name="Kawai Y."/>
            <person name="Isono Y."/>
            <person name="Nakamura Y."/>
            <person name="Nagahari K."/>
            <person name="Murakami K."/>
            <person name="Yasuda T."/>
            <person name="Iwayanagi T."/>
            <person name="Wagatsuma M."/>
            <person name="Shiratori A."/>
            <person name="Sudo H."/>
            <person name="Hosoiri T."/>
            <person name="Kaku Y."/>
            <person name="Kodaira H."/>
            <person name="Kondo H."/>
            <person name="Sugawara M."/>
            <person name="Takahashi M."/>
            <person name="Kanda K."/>
            <person name="Yokoi T."/>
            <person name="Furuya T."/>
            <person name="Kikkawa E."/>
            <person name="Omura Y."/>
            <person name="Abe K."/>
            <person name="Kamihara K."/>
            <person name="Katsuta N."/>
            <person name="Sato K."/>
            <person name="Tanikawa M."/>
            <person name="Yamazaki M."/>
            <person name="Ninomiya K."/>
            <person name="Ishibashi T."/>
            <person name="Yamashita H."/>
            <person name="Murakawa K."/>
            <person name="Fujimori K."/>
            <person name="Tanai H."/>
            <person name="Kimata M."/>
            <person name="Watanabe M."/>
            <person name="Hiraoka S."/>
            <person name="Chiba Y."/>
            <person name="Ishida S."/>
            <person name="Ono Y."/>
            <person name="Takiguchi S."/>
            <person name="Watanabe S."/>
            <person name="Yosida M."/>
            <person name="Hotuta T."/>
            <person name="Kusano J."/>
            <person name="Kanehori K."/>
            <person name="Takahashi-Fujii A."/>
            <person name="Hara H."/>
            <person name="Tanase T.-O."/>
            <person name="Nomura Y."/>
            <person name="Togiya S."/>
            <person name="Komai F."/>
            <person name="Hara R."/>
            <person name="Takeuchi K."/>
            <person name="Arita M."/>
            <person name="Imose N."/>
            <person name="Musashino K."/>
            <person name="Yuuki H."/>
            <person name="Oshima A."/>
            <person name="Sasaki N."/>
            <person name="Aotsuka S."/>
            <person name="Yoshikawa Y."/>
            <person name="Matsunawa H."/>
            <person name="Ichihara T."/>
            <person name="Shiohata N."/>
            <person name="Sano S."/>
            <person name="Moriya S."/>
            <person name="Momiyama H."/>
            <person name="Satoh N."/>
            <person name="Takami S."/>
            <person name="Terashima Y."/>
            <person name="Suzuki O."/>
            <person name="Nakagawa S."/>
            <person name="Senoh A."/>
            <person name="Mizoguchi H."/>
            <person name="Goto Y."/>
            <person name="Shimizu F."/>
            <person name="Wakebe H."/>
            <person name="Hishigaki H."/>
            <person name="Watanabe T."/>
            <person name="Sugiyama A."/>
            <person name="Takemoto M."/>
            <person name="Kawakami B."/>
            <person name="Yamazaki M."/>
            <person name="Watanabe K."/>
            <person name="Kumagai A."/>
            <person name="Itakura S."/>
            <person name="Fukuzumi Y."/>
            <person name="Fujimori Y."/>
            <person name="Komiyama M."/>
            <person name="Tashiro H."/>
            <person name="Tanigami A."/>
            <person name="Fujiwara T."/>
            <person name="Ono T."/>
            <person name="Yamada K."/>
            <person name="Fujii Y."/>
            <person name="Ozaki K."/>
            <person name="Hirao M."/>
            <person name="Ohmori Y."/>
            <person name="Kawabata A."/>
            <person name="Hikiji T."/>
            <person name="Kobatake N."/>
            <person name="Inagaki H."/>
            <person name="Ikema Y."/>
            <person name="Okamoto S."/>
            <person name="Okitani R."/>
            <person name="Kawakami T."/>
            <person name="Noguchi S."/>
            <person name="Itoh T."/>
            <person name="Shigeta K."/>
            <person name="Senba T."/>
            <person name="Matsumura K."/>
            <person name="Nakajima Y."/>
            <person name="Mizuno T."/>
            <person name="Morinaga M."/>
            <person name="Sasaki M."/>
            <person name="Togashi T."/>
            <person name="Oyama M."/>
            <person name="Hata H."/>
            <person name="Watanabe M."/>
            <person name="Komatsu T."/>
            <person name="Mizushima-Sugano J."/>
            <person name="Satoh T."/>
            <person name="Shirai Y."/>
            <person name="Takahashi Y."/>
            <person name="Nakagawa K."/>
            <person name="Okumura K."/>
            <person name="Nagase T."/>
            <person name="Nomura N."/>
            <person name="Kikuchi H."/>
            <person name="Masuho Y."/>
            <person name="Yamashita R."/>
            <person name="Nakai K."/>
            <person name="Yada T."/>
            <person name="Nakamura Y."/>
            <person name="Ohara O."/>
            <person name="Isogai T."/>
            <person name="Sugano S."/>
        </authorList>
    </citation>
    <scope>NUCLEOTIDE SEQUENCE [LARGE SCALE MRNA] (ISOFORM 2)</scope>
    <source>
        <tissue>Testis</tissue>
    </source>
</reference>
<reference key="3">
    <citation type="journal article" date="2004" name="Genome Res.">
        <title>The status, quality, and expansion of the NIH full-length cDNA project: the Mammalian Gene Collection (MGC).</title>
        <authorList>
            <consortium name="The MGC Project Team"/>
        </authorList>
    </citation>
    <scope>NUCLEOTIDE SEQUENCE [LARGE SCALE MRNA] (ISOFORMS 3 AND 4)</scope>
    <scope>NUCLEOTIDE SEQUENCE [LARGE SCALE MRNA] OF 9-449 (ISOFORM 1)</scope>
    <source>
        <tissue>Lymph</tissue>
        <tissue>Prostate</tissue>
    </source>
</reference>
<reference key="4">
    <citation type="journal article" date="2011" name="BMC Syst. Biol.">
        <title>Initial characterization of the human central proteome.</title>
        <authorList>
            <person name="Burkard T.R."/>
            <person name="Planyavsky M."/>
            <person name="Kaupe I."/>
            <person name="Breitwieser F.P."/>
            <person name="Buerckstuemmer T."/>
            <person name="Bennett K.L."/>
            <person name="Superti-Furga G."/>
            <person name="Colinge J."/>
        </authorList>
    </citation>
    <scope>IDENTIFICATION BY MASS SPECTROMETRY [LARGE SCALE ANALYSIS]</scope>
</reference>
<reference key="5">
    <citation type="journal article" date="2013" name="Int. J. Biochem. Cell Biol.">
        <title>The human adenylate kinase 9 is a nucleoside mono- and diphosphate kinase.</title>
        <authorList>
            <person name="Amiri M."/>
            <person name="Conserva F."/>
            <person name="Panayiotou C."/>
            <person name="Karlsson A."/>
            <person name="Solaroli N."/>
        </authorList>
    </citation>
    <scope>FUNCTION</scope>
    <scope>CATALYTIC ACTIVITY</scope>
</reference>
<reference key="6">
    <citation type="journal article" date="2018" name="Sci. Adv.">
        <title>CMPK2 and BCL-G are associated with type 1 interferon-induced HIV restriction in humans.</title>
        <authorList>
            <person name="El-Diwany R."/>
            <person name="Soliman M."/>
            <person name="Sugawara S."/>
            <person name="Breitwieser F."/>
            <person name="Skaist A."/>
            <person name="Coggiano C."/>
            <person name="Sangal N."/>
            <person name="Chattergoon M."/>
            <person name="Bailey J.R."/>
            <person name="Siliciano R.F."/>
            <person name="Blankson J.N."/>
            <person name="Ray S.C."/>
            <person name="Wheelan S.J."/>
            <person name="Thomas D.L."/>
            <person name="Balagopal A."/>
        </authorList>
    </citation>
    <scope>FUNCTION</scope>
    <scope>INDUCTION BY INTERFERON-ALPHA</scope>
</reference>
<reference key="7">
    <citation type="journal article" date="2021" name="IScience">
        <title>Mitochondrial CMPK2 mediates immunomodulatory and antiviral activities through IFN-dependent and IFN-independent pathways.</title>
        <authorList>
            <person name="Lai J.H."/>
            <person name="Wu D.W."/>
            <person name="Wu C.H."/>
            <person name="Hung L.F."/>
            <person name="Huang C.Y."/>
            <person name="Ka S.M."/>
            <person name="Chen A."/>
            <person name="Chang Z.F."/>
            <person name="Ho L.J."/>
        </authorList>
    </citation>
    <scope>FUNCTION</scope>
    <scope>TISSUE SPECIFICITY</scope>
    <scope>SUBCELLULAR LOCATION</scope>
</reference>
<reference key="8">
    <citation type="journal article" date="2022" name="Cell Discov.">
        <title>Loss of function of CMPK2 causes mitochondria deficiency and brain calcification.</title>
        <authorList>
            <person name="Zhao M."/>
            <person name="Su H.Z."/>
            <person name="Zeng Y.H."/>
            <person name="Sun Y."/>
            <person name="Guo X.X."/>
            <person name="Li Y.L."/>
            <person name="Wang C."/>
            <person name="Zhao Z.Y."/>
            <person name="Huang X.J."/>
            <person name="Lin K.J."/>
            <person name="Ye Z.L."/>
            <person name="Lin B.W."/>
            <person name="Hong S."/>
            <person name="Zheng J."/>
            <person name="Liu Y.B."/>
            <person name="Yao X.P."/>
            <person name="Yang D."/>
            <person name="Lu Y.Q."/>
            <person name="Chen H.Z."/>
            <person name="Zuo E."/>
            <person name="Yang G."/>
            <person name="Wang H.T."/>
            <person name="Huang C.W."/>
            <person name="Lin X.H."/>
            <person name="Cen Z."/>
            <person name="Lai L.L."/>
            <person name="Zhang Y.K."/>
            <person name="Li X."/>
            <person name="Lai T."/>
            <person name="Lin J."/>
            <person name="Zuo D.D."/>
            <person name="Lin M.T."/>
            <person name="Liou C.W."/>
            <person name="Kong Q.X."/>
            <person name="Yan C.Z."/>
            <person name="Xiong Z.Q."/>
            <person name="Wang N."/>
            <person name="Luo W."/>
            <person name="Zhao C.P."/>
            <person name="Cheng X."/>
            <person name="Chen W.J."/>
        </authorList>
    </citation>
    <scope>INVOLVEMENT IN IBGC10</scope>
    <scope>VARIANT IBGC10 CYS-414</scope>
    <scope>CHARACTERIZATION OF VARIANT IBGC10 CYS-414</scope>
    <scope>SUBCELLULAR LOCATION</scope>
</reference>
<reference key="9">
    <citation type="journal article" date="2023" name="PLoS Biol.">
        <title>CMPK2 is a host restriction factor that inhibits infection of multiple coronaviruses in a cell-intrinsic manner.</title>
        <authorList>
            <person name="Zhu M."/>
            <person name="Lv J."/>
            <person name="Wang W."/>
            <person name="Guo R."/>
            <person name="Zhong C."/>
            <person name="Antia A."/>
            <person name="Zeng Q."/>
            <person name="Li J."/>
            <person name="Liu Q."/>
            <person name="Zhou J."/>
            <person name="Zhu X."/>
            <person name="Fan B."/>
            <person name="Ding S."/>
            <person name="Li B."/>
        </authorList>
    </citation>
    <scope>FUNCTION</scope>
</reference>
<reference key="10">
    <citation type="journal article" date="2023" name="PLoS Pathog.">
        <title>CMPK2 restricts Zika virus replication by inhibiting viral translation.</title>
        <authorList>
            <person name="Pawlak J.B."/>
            <person name="Hsu J.C."/>
            <person name="Xia H."/>
            <person name="Han P."/>
            <person name="Suh H.W."/>
            <person name="Grove T.L."/>
            <person name="Morrison J."/>
            <person name="Shi P.Y."/>
            <person name="Cresswell P."/>
            <person name="Laurent-Rolle M."/>
        </authorList>
    </citation>
    <scope>FUNCTION</scope>
    <scope>SUBCELLULAR LOCATION</scope>
</reference>
<comment type="function">
    <text evidence="1 3 4 5 6 8 9">Mitochondrial nucleotide monophosphate kinase needed for salvage dNTP synthesis that mediates immunomodulatory and antiviral activities through IFN-dependent and IFN-independent pathways (PubMed:17999954, PubMed:30083606, PubMed:36930652, PubMed:37075076). Restricts the replication of multiple viruses including flaviviruses or coronaviruses (PubMed:30083606, PubMed:36930652, PubMed:37075076). Together with viperin/RSAD2 and ddhCTP, suppresses the replication of several coronaviruses through inhibition of the viral RNA-dependent RNA polymerase activities (PubMed:36930652). Concerning flaviviruses, restricts RNA translation when localized to the mitochondria independently of its kinase activity (PubMed:37075076). Is able to phosphorylate dUMP, dCMP, CMP, UMP and monophosphates of the pyrimidine nucleoside analogs ddC, dFdC, araC, BVDU and FdUrd with ATP as phosphate donor. Efficacy is highest for dUMP followed by dCMP while CMP and UMP are poor substrates. Controls therefore mitochondrial DNA synthesis by supplying required deoxyribonucleotides (By similarity). CMPK2-dependent mitochondrial DNA synthesis is necessary for the production of oxidized mitochondrial DNA fragments after exposure to NLRP3 activators (By similarity). In turn, cytosolic oxidized mtDNA associates with the NLRP3 inflammasome complex and is required for its activation (By similarity).</text>
</comment>
<comment type="catalytic activity">
    <reaction evidence="4">
        <text>CMP + ATP = CDP + ADP</text>
        <dbReference type="Rhea" id="RHEA:11600"/>
        <dbReference type="ChEBI" id="CHEBI:30616"/>
        <dbReference type="ChEBI" id="CHEBI:58069"/>
        <dbReference type="ChEBI" id="CHEBI:60377"/>
        <dbReference type="ChEBI" id="CHEBI:456216"/>
        <dbReference type="EC" id="2.7.4.14"/>
    </reaction>
</comment>
<comment type="catalytic activity">
    <reaction evidence="4">
        <text>dCMP + ATP = dCDP + ADP</text>
        <dbReference type="Rhea" id="RHEA:25094"/>
        <dbReference type="ChEBI" id="CHEBI:30616"/>
        <dbReference type="ChEBI" id="CHEBI:57566"/>
        <dbReference type="ChEBI" id="CHEBI:58593"/>
        <dbReference type="ChEBI" id="CHEBI:456216"/>
        <dbReference type="EC" id="2.7.4.14"/>
    </reaction>
</comment>
<comment type="catalytic activity">
    <reaction evidence="4">
        <text>a 2'-deoxyribonucleoside 5'-diphosphate + ATP = a 2'-deoxyribonucleoside 5'-triphosphate + ADP</text>
        <dbReference type="Rhea" id="RHEA:44640"/>
        <dbReference type="ChEBI" id="CHEBI:30616"/>
        <dbReference type="ChEBI" id="CHEBI:61560"/>
        <dbReference type="ChEBI" id="CHEBI:73316"/>
        <dbReference type="ChEBI" id="CHEBI:456216"/>
        <dbReference type="EC" id="2.7.4.6"/>
    </reaction>
</comment>
<comment type="catalytic activity">
    <reaction evidence="4">
        <text>a ribonucleoside 5'-diphosphate + ATP = a ribonucleoside 5'-triphosphate + ADP</text>
        <dbReference type="Rhea" id="RHEA:18113"/>
        <dbReference type="ChEBI" id="CHEBI:30616"/>
        <dbReference type="ChEBI" id="CHEBI:57930"/>
        <dbReference type="ChEBI" id="CHEBI:61557"/>
        <dbReference type="ChEBI" id="CHEBI:456216"/>
        <dbReference type="EC" id="2.7.4.6"/>
    </reaction>
</comment>
<comment type="biophysicochemical properties">
    <kinetics>
        <KM>3.09 mM for CMP</KM>
        <KM>6.3 mM for UMP</KM>
        <KM>1.31 mM for dCMP</KM>
        <KM>0.1 mM for dUMP</KM>
        <Vmax>1.64 umol/min/mg enzyme towards CMP</Vmax>
        <Vmax>0.19 umol/min/mg enzyme towards UMP</Vmax>
        <Vmax>1.77 umol/min/mg enzyme towards dCMP</Vmax>
        <Vmax>0.48 umol/min/mg enzyme towards dUMP</Vmax>
    </kinetics>
</comment>
<comment type="subcellular location">
    <subcellularLocation>
        <location evidence="3 6 7 9">Mitochondrion</location>
    </subcellularLocation>
    <text evidence="9">Mitochondrial localization is required for its antiviral function.</text>
</comment>
<comment type="alternative products">
    <event type="alternative splicing"/>
    <isoform>
        <id>Q5EBM0-1</id>
        <name>1</name>
        <sequence type="displayed"/>
    </isoform>
    <isoform>
        <id>Q5EBM0-2</id>
        <name>2</name>
        <sequence type="described" ref="VSP_033238 VSP_033239"/>
    </isoform>
    <isoform>
        <id>Q5EBM0-3</id>
        <name>3</name>
        <sequence type="described" ref="VSP_033240"/>
    </isoform>
    <isoform>
        <id>Q5EBM0-4</id>
        <name>4</name>
        <sequence type="described" ref="VSP_033241"/>
    </isoform>
</comment>
<comment type="tissue specificity">
    <text evidence="6">High levels are observed in myeloid, lymphoid and mesenchymal tissues.</text>
</comment>
<comment type="induction">
    <text evidence="5 8">By interferon-alpha (PubMed:30083606). IRF1 is crucial for the transcriptional activation of CMPK2 (PubMed:36930652).</text>
</comment>
<comment type="disease" evidence="7">
    <disease id="DI-06967">
        <name>Basal ganglia calcification, idiopathic, 10, autosomal recessive</name>
        <acronym>IBGC10</acronym>
        <description>A form of basal ganglia calcification, a genetically heterogeneous condition characterized by symmetric calcification in the basal ganglia and other brain regions. Affected individuals can either be asymptomatic or show a wide spectrum of neuropsychiatric symptoms, including parkinsonism, dystonia, tremor, ataxia, dementia, psychosis, seizures, and chronic headache. Serum levels of calcium, phosphate, alkaline phosphatase and parathyroid hormone are normal. The neuropathological hallmark of the disease is vascular and pericapillary calcification, mainly of calcium phosphate, in the affected brain areas. IBGC10 is a progressive form characterized by motor dysfunction, speech impairment, and impaired cognition.</description>
        <dbReference type="MIM" id="621018"/>
    </disease>
    <text>The disease may be caused by variants affecting the gene represented in this entry.</text>
</comment>
<comment type="similarity">
    <text evidence="12">Belongs to the thymidylate kinase family.</text>
</comment>
<keyword id="KW-0025">Alternative splicing</keyword>
<keyword id="KW-0067">ATP-binding</keyword>
<keyword id="KW-0175">Coiled coil</keyword>
<keyword id="KW-0418">Kinase</keyword>
<keyword id="KW-0496">Mitochondrion</keyword>
<keyword id="KW-0547">Nucleotide-binding</keyword>
<keyword id="KW-1267">Proteomics identification</keyword>
<keyword id="KW-0665">Pyrimidine biosynthesis</keyword>
<keyword id="KW-1185">Reference proteome</keyword>
<keyword id="KW-0808">Transferase</keyword>
<keyword id="KW-0809">Transit peptide</keyword>
<accession>Q5EBM0</accession>
<accession>A2RUB0</accession>
<accession>A5D8T2</accession>
<accession>B7ZM18</accession>
<accession>Q6ZRU2</accession>
<accession>Q96AL8</accession>
<organism>
    <name type="scientific">Homo sapiens</name>
    <name type="common">Human</name>
    <dbReference type="NCBI Taxonomy" id="9606"/>
    <lineage>
        <taxon>Eukaryota</taxon>
        <taxon>Metazoa</taxon>
        <taxon>Chordata</taxon>
        <taxon>Craniata</taxon>
        <taxon>Vertebrata</taxon>
        <taxon>Euteleostomi</taxon>
        <taxon>Mammalia</taxon>
        <taxon>Eutheria</taxon>
        <taxon>Euarchontoglires</taxon>
        <taxon>Primates</taxon>
        <taxon>Haplorrhini</taxon>
        <taxon>Catarrhini</taxon>
        <taxon>Hominidae</taxon>
        <taxon>Homo</taxon>
    </lineage>
</organism>
<dbReference type="EC" id="2.7.4.14"/>
<dbReference type="EC" id="2.7.4.6"/>
<dbReference type="EMBL" id="AK127983">
    <property type="protein sequence ID" value="BAC87217.1"/>
    <property type="molecule type" value="mRNA"/>
</dbReference>
<dbReference type="EMBL" id="BC016969">
    <property type="protein sequence ID" value="AAH16969.1"/>
    <property type="molecule type" value="mRNA"/>
</dbReference>
<dbReference type="EMBL" id="BC141802">
    <property type="protein sequence ID" value="AAI41803.1"/>
    <property type="molecule type" value="mRNA"/>
</dbReference>
<dbReference type="EMBL" id="BC132821">
    <property type="protein sequence ID" value="AAI32822.1"/>
    <property type="molecule type" value="mRNA"/>
</dbReference>
<dbReference type="EMBL" id="BC089425">
    <property type="protein sequence ID" value="AAH89425.1"/>
    <property type="molecule type" value="mRNA"/>
</dbReference>
<dbReference type="EMBL" id="BC144202">
    <property type="protein sequence ID" value="AAI44203.1"/>
    <property type="molecule type" value="mRNA"/>
</dbReference>
<dbReference type="CCDS" id="CCDS42648.1">
    <molecule id="Q5EBM0-1"/>
</dbReference>
<dbReference type="CCDS" id="CCDS58695.1">
    <molecule id="Q5EBM0-3"/>
</dbReference>
<dbReference type="CCDS" id="CCDS58696.1">
    <molecule id="Q5EBM0-4"/>
</dbReference>
<dbReference type="RefSeq" id="NP_001243406.1">
    <molecule id="Q5EBM0-4"/>
    <property type="nucleotide sequence ID" value="NM_001256477.1"/>
</dbReference>
<dbReference type="RefSeq" id="NP_001243407.1">
    <molecule id="Q5EBM0-3"/>
    <property type="nucleotide sequence ID" value="NM_001256478.1"/>
</dbReference>
<dbReference type="RefSeq" id="NP_997198.2">
    <molecule id="Q5EBM0-1"/>
    <property type="nucleotide sequence ID" value="NM_207315.4"/>
</dbReference>
<dbReference type="SMR" id="Q5EBM0"/>
<dbReference type="FunCoup" id="Q5EBM0">
    <property type="interactions" value="1752"/>
</dbReference>
<dbReference type="STRING" id="9606.ENSP00000256722"/>
<dbReference type="iPTMnet" id="Q5EBM0"/>
<dbReference type="PhosphoSitePlus" id="Q5EBM0"/>
<dbReference type="BioMuta" id="CMPK2"/>
<dbReference type="DMDM" id="296439392"/>
<dbReference type="jPOST" id="Q5EBM0"/>
<dbReference type="MassIVE" id="Q5EBM0"/>
<dbReference type="PaxDb" id="9606-ENSP00000256722"/>
<dbReference type="PeptideAtlas" id="Q5EBM0"/>
<dbReference type="ProteomicsDB" id="62766">
    <molecule id="Q5EBM0-1"/>
</dbReference>
<dbReference type="ProteomicsDB" id="62767">
    <molecule id="Q5EBM0-2"/>
</dbReference>
<dbReference type="ProteomicsDB" id="62768">
    <molecule id="Q5EBM0-3"/>
</dbReference>
<dbReference type="ProteomicsDB" id="62769">
    <molecule id="Q5EBM0-4"/>
</dbReference>
<dbReference type="Pumba" id="Q5EBM0"/>
<dbReference type="Antibodypedia" id="26409">
    <property type="antibodies" value="89 antibodies from 21 providers"/>
</dbReference>
<dbReference type="DNASU" id="129607"/>
<dbReference type="Ensembl" id="ENST00000256722.10">
    <molecule id="Q5EBM0-1"/>
    <property type="protein sequence ID" value="ENSP00000256722.5"/>
    <property type="gene ID" value="ENSG00000134326.12"/>
</dbReference>
<dbReference type="Ensembl" id="ENST00000404168.1">
    <molecule id="Q5EBM0-4"/>
    <property type="protein sequence ID" value="ENSP00000384915.1"/>
    <property type="gene ID" value="ENSG00000134326.12"/>
</dbReference>
<dbReference type="Ensembl" id="ENST00000458098.5">
    <molecule id="Q5EBM0-3"/>
    <property type="protein sequence ID" value="ENSP00000396385.1"/>
    <property type="gene ID" value="ENSG00000134326.12"/>
</dbReference>
<dbReference type="GeneID" id="129607"/>
<dbReference type="KEGG" id="hsa:129607"/>
<dbReference type="MANE-Select" id="ENST00000256722.10">
    <property type="protein sequence ID" value="ENSP00000256722.5"/>
    <property type="RefSeq nucleotide sequence ID" value="NM_207315.4"/>
    <property type="RefSeq protein sequence ID" value="NP_997198.2"/>
</dbReference>
<dbReference type="UCSC" id="uc002qyo.5">
    <molecule id="Q5EBM0-1"/>
    <property type="organism name" value="human"/>
</dbReference>
<dbReference type="AGR" id="HGNC:27015"/>
<dbReference type="CTD" id="129607"/>
<dbReference type="DisGeNET" id="129607"/>
<dbReference type="GeneCards" id="CMPK2"/>
<dbReference type="HGNC" id="HGNC:27015">
    <property type="gene designation" value="CMPK2"/>
</dbReference>
<dbReference type="HPA" id="ENSG00000134326">
    <property type="expression patterns" value="Tissue enhanced (salivary)"/>
</dbReference>
<dbReference type="MalaCards" id="CMPK2"/>
<dbReference type="MIM" id="611787">
    <property type="type" value="gene"/>
</dbReference>
<dbReference type="MIM" id="621018">
    <property type="type" value="phenotype"/>
</dbReference>
<dbReference type="neXtProt" id="NX_Q5EBM0"/>
<dbReference type="OpenTargets" id="ENSG00000134326"/>
<dbReference type="Orphanet" id="1980">
    <property type="disease" value="Bilateral striopallidodentate calcinosis"/>
</dbReference>
<dbReference type="PharmGKB" id="PA162382556"/>
<dbReference type="VEuPathDB" id="HostDB:ENSG00000134326"/>
<dbReference type="eggNOG" id="KOG3327">
    <property type="taxonomic scope" value="Eukaryota"/>
</dbReference>
<dbReference type="GeneTree" id="ENSGT00940000154030"/>
<dbReference type="HOGENOM" id="CLU_049896_0_0_1"/>
<dbReference type="InParanoid" id="Q5EBM0"/>
<dbReference type="OMA" id="ECTSLIP"/>
<dbReference type="OrthoDB" id="425602at2759"/>
<dbReference type="PAN-GO" id="Q5EBM0">
    <property type="GO annotations" value="9 GO annotations based on evolutionary models"/>
</dbReference>
<dbReference type="PhylomeDB" id="Q5EBM0"/>
<dbReference type="TreeFam" id="TF328875"/>
<dbReference type="BRENDA" id="2.7.4.14">
    <property type="organism ID" value="2681"/>
</dbReference>
<dbReference type="PathwayCommons" id="Q5EBM0"/>
<dbReference type="SABIO-RK" id="Q5EBM0"/>
<dbReference type="BioGRID-ORCS" id="129607">
    <property type="hits" value="17 hits in 1161 CRISPR screens"/>
</dbReference>
<dbReference type="GenomeRNAi" id="129607"/>
<dbReference type="Pharos" id="Q5EBM0">
    <property type="development level" value="Tbio"/>
</dbReference>
<dbReference type="PRO" id="PR:Q5EBM0"/>
<dbReference type="Proteomes" id="UP000005640">
    <property type="component" value="Chromosome 2"/>
</dbReference>
<dbReference type="RNAct" id="Q5EBM0">
    <property type="molecule type" value="protein"/>
</dbReference>
<dbReference type="Bgee" id="ENSG00000134326">
    <property type="expression patterns" value="Expressed in palpebral conjunctiva and 184 other cell types or tissues"/>
</dbReference>
<dbReference type="GO" id="GO:0005737">
    <property type="term" value="C:cytoplasm"/>
    <property type="evidence" value="ECO:0000318"/>
    <property type="project" value="GO_Central"/>
</dbReference>
<dbReference type="GO" id="GO:0005739">
    <property type="term" value="C:mitochondrion"/>
    <property type="evidence" value="ECO:0000314"/>
    <property type="project" value="HPA"/>
</dbReference>
<dbReference type="GO" id="GO:0005654">
    <property type="term" value="C:nucleoplasm"/>
    <property type="evidence" value="ECO:0000314"/>
    <property type="project" value="HPA"/>
</dbReference>
<dbReference type="GO" id="GO:0004127">
    <property type="term" value="F:(d)CMP kinase activity"/>
    <property type="evidence" value="ECO:0000314"/>
    <property type="project" value="MGI"/>
</dbReference>
<dbReference type="GO" id="GO:0005524">
    <property type="term" value="F:ATP binding"/>
    <property type="evidence" value="ECO:0007669"/>
    <property type="project" value="UniProtKB-KW"/>
</dbReference>
<dbReference type="GO" id="GO:0036430">
    <property type="term" value="F:CMP kinase activity"/>
    <property type="evidence" value="ECO:0007669"/>
    <property type="project" value="RHEA"/>
</dbReference>
<dbReference type="GO" id="GO:0036431">
    <property type="term" value="F:dCMP kinase activity"/>
    <property type="evidence" value="ECO:0007669"/>
    <property type="project" value="RHEA"/>
</dbReference>
<dbReference type="GO" id="GO:0004798">
    <property type="term" value="F:dTMP kinase activity"/>
    <property type="evidence" value="ECO:0000318"/>
    <property type="project" value="GO_Central"/>
</dbReference>
<dbReference type="GO" id="GO:0004550">
    <property type="term" value="F:nucleoside diphosphate kinase activity"/>
    <property type="evidence" value="ECO:0000314"/>
    <property type="project" value="UniProtKB"/>
</dbReference>
<dbReference type="GO" id="GO:0033862">
    <property type="term" value="F:UMP kinase activity"/>
    <property type="evidence" value="ECO:0000314"/>
    <property type="project" value="MGI"/>
</dbReference>
<dbReference type="GO" id="GO:0071222">
    <property type="term" value="P:cellular response to lipopolysaccharide"/>
    <property type="evidence" value="ECO:0007669"/>
    <property type="project" value="Ensembl"/>
</dbReference>
<dbReference type="GO" id="GO:0006233">
    <property type="term" value="P:dTDP biosynthetic process"/>
    <property type="evidence" value="ECO:0000318"/>
    <property type="project" value="GO_Central"/>
</dbReference>
<dbReference type="GO" id="GO:0006235">
    <property type="term" value="P:dTTP biosynthetic process"/>
    <property type="evidence" value="ECO:0000318"/>
    <property type="project" value="GO_Central"/>
</dbReference>
<dbReference type="GO" id="GO:0006227">
    <property type="term" value="P:dUDP biosynthetic process"/>
    <property type="evidence" value="ECO:0000318"/>
    <property type="project" value="GO_Central"/>
</dbReference>
<dbReference type="FunFam" id="3.40.50.300:FF:001133">
    <property type="entry name" value="UMP-CMP kinase 2, mitochondrial"/>
    <property type="match status" value="1"/>
</dbReference>
<dbReference type="Gene3D" id="3.40.50.300">
    <property type="entry name" value="P-loop containing nucleotide triphosphate hydrolases"/>
    <property type="match status" value="1"/>
</dbReference>
<dbReference type="InterPro" id="IPR027417">
    <property type="entry name" value="P-loop_NTPase"/>
</dbReference>
<dbReference type="InterPro" id="IPR039430">
    <property type="entry name" value="Thymidylate_kin-like_dom"/>
</dbReference>
<dbReference type="InterPro" id="IPR014505">
    <property type="entry name" value="UMP-CMP_kinase_2"/>
</dbReference>
<dbReference type="PANTHER" id="PTHR10344">
    <property type="entry name" value="THYMIDYLATE KINASE"/>
    <property type="match status" value="1"/>
</dbReference>
<dbReference type="PANTHER" id="PTHR10344:SF4">
    <property type="entry name" value="UMP-CMP KINASE 2, MITOCHONDRIAL"/>
    <property type="match status" value="1"/>
</dbReference>
<dbReference type="Pfam" id="PF02223">
    <property type="entry name" value="Thymidylate_kin"/>
    <property type="match status" value="1"/>
</dbReference>
<dbReference type="PIRSF" id="PIRSF019736">
    <property type="entry name" value="dTMP_TKRP1"/>
    <property type="match status" value="1"/>
</dbReference>
<dbReference type="SUPFAM" id="SSF52540">
    <property type="entry name" value="P-loop containing nucleoside triphosphate hydrolases"/>
    <property type="match status" value="1"/>
</dbReference>
<gene>
    <name type="primary">CMPK2</name>
</gene>